<reference key="1">
    <citation type="submission" date="1991-12" db="EMBL/GenBank/DDBJ databases">
        <title>Systematics of Caryophyllales using large subunit of ribulose-1, 5-bisphosphate carboxylase/oxygenase (rbcL) gene sequence data.</title>
        <authorList>
            <person name="Rettig J.H."/>
            <person name="Wilson H.D."/>
            <person name="Manhart J.R."/>
        </authorList>
    </citation>
    <scope>NUCLEOTIDE SEQUENCE [GENOMIC DNA]</scope>
</reference>
<sequence>MSPQTETKASVGFKAGVKDYKLTYYTPEYVPLDTDILAAFRVTPQPGVPSEEAGAAVAAESSTGTWTTVWTDGLTSLDRYKGRCYHIDPVPGEENQYICYVAYPLDLFEEGSVTNMFTSIVGNVFGFKALRALRLEDLRIPVAYIKTFQGPPHGIQVERDKLNKYGRPLLGCTIKPKLGLSAKNYGRAVYECLRGGLDFTKDDENVNSQPFMRWRDRFLFCAEAIYKAQAETGEIKGHYLNATAGTCEEMIKRAVFARELGVPIVMHDYLTGGFTANTSLAHYCRDNGLLLHIHRAMHAVIDRQKNHGMHFRVLAKALRLSGGDHIHAGTVVGKLEGERDITLGFVDLLRDDYTEIDADRGIYFTQSWVSTPGVLPVASGGIHVWHMPALTEIFGDDSVLQFGGGTLGHPWGNAPGAVANRVALEACVQARNEGRDLAREGATIIREAAKWSPELAAACEVWKEIKFEFPAVDVLDKAKK</sequence>
<protein>
    <recommendedName>
        <fullName evidence="1">Ribulose bisphosphate carboxylase large chain</fullName>
        <shortName evidence="1">RuBisCO large subunit</shortName>
        <ecNumber evidence="1">4.1.1.39</ecNumber>
    </recommendedName>
</protein>
<evidence type="ECO:0000255" key="1">
    <source>
        <dbReference type="HAMAP-Rule" id="MF_01338"/>
    </source>
</evidence>
<organism>
    <name type="scientific">Mollugo verticillata</name>
    <name type="common">Green carpetweed</name>
    <dbReference type="NCBI Taxonomy" id="3592"/>
    <lineage>
        <taxon>Eukaryota</taxon>
        <taxon>Viridiplantae</taxon>
        <taxon>Streptophyta</taxon>
        <taxon>Embryophyta</taxon>
        <taxon>Tracheophyta</taxon>
        <taxon>Spermatophyta</taxon>
        <taxon>Magnoliopsida</taxon>
        <taxon>eudicotyledons</taxon>
        <taxon>Gunneridae</taxon>
        <taxon>Pentapetalae</taxon>
        <taxon>Caryophyllales</taxon>
        <taxon>Molluginaceae</taxon>
        <taxon>Mollugo</taxon>
    </lineage>
</organism>
<dbReference type="EC" id="4.1.1.39" evidence="1"/>
<dbReference type="EMBL" id="M62566">
    <property type="protein sequence ID" value="AAA84458.1"/>
    <property type="molecule type" value="Genomic_DNA"/>
</dbReference>
<dbReference type="SMR" id="P25832"/>
<dbReference type="GO" id="GO:0009507">
    <property type="term" value="C:chloroplast"/>
    <property type="evidence" value="ECO:0007669"/>
    <property type="project" value="UniProtKB-SubCell"/>
</dbReference>
<dbReference type="GO" id="GO:0000287">
    <property type="term" value="F:magnesium ion binding"/>
    <property type="evidence" value="ECO:0007669"/>
    <property type="project" value="UniProtKB-UniRule"/>
</dbReference>
<dbReference type="GO" id="GO:0004497">
    <property type="term" value="F:monooxygenase activity"/>
    <property type="evidence" value="ECO:0007669"/>
    <property type="project" value="UniProtKB-KW"/>
</dbReference>
<dbReference type="GO" id="GO:0016984">
    <property type="term" value="F:ribulose-bisphosphate carboxylase activity"/>
    <property type="evidence" value="ECO:0007669"/>
    <property type="project" value="UniProtKB-UniRule"/>
</dbReference>
<dbReference type="GO" id="GO:0009853">
    <property type="term" value="P:photorespiration"/>
    <property type="evidence" value="ECO:0007669"/>
    <property type="project" value="UniProtKB-KW"/>
</dbReference>
<dbReference type="GO" id="GO:0019253">
    <property type="term" value="P:reductive pentose-phosphate cycle"/>
    <property type="evidence" value="ECO:0007669"/>
    <property type="project" value="UniProtKB-UniRule"/>
</dbReference>
<dbReference type="CDD" id="cd08212">
    <property type="entry name" value="RuBisCO_large_I"/>
    <property type="match status" value="1"/>
</dbReference>
<dbReference type="FunFam" id="3.20.20.110:FF:000001">
    <property type="entry name" value="Ribulose bisphosphate carboxylase large chain"/>
    <property type="match status" value="1"/>
</dbReference>
<dbReference type="FunFam" id="3.30.70.150:FF:000001">
    <property type="entry name" value="Ribulose bisphosphate carboxylase large chain"/>
    <property type="match status" value="1"/>
</dbReference>
<dbReference type="Gene3D" id="3.20.20.110">
    <property type="entry name" value="Ribulose bisphosphate carboxylase, large subunit, C-terminal domain"/>
    <property type="match status" value="1"/>
</dbReference>
<dbReference type="Gene3D" id="3.30.70.150">
    <property type="entry name" value="RuBisCO large subunit, N-terminal domain"/>
    <property type="match status" value="1"/>
</dbReference>
<dbReference type="HAMAP" id="MF_01338">
    <property type="entry name" value="RuBisCO_L_type1"/>
    <property type="match status" value="1"/>
</dbReference>
<dbReference type="InterPro" id="IPR033966">
    <property type="entry name" value="RuBisCO"/>
</dbReference>
<dbReference type="InterPro" id="IPR020878">
    <property type="entry name" value="RuBisCo_large_chain_AS"/>
</dbReference>
<dbReference type="InterPro" id="IPR000685">
    <property type="entry name" value="RuBisCO_lsu_C"/>
</dbReference>
<dbReference type="InterPro" id="IPR036376">
    <property type="entry name" value="RuBisCO_lsu_C_sf"/>
</dbReference>
<dbReference type="InterPro" id="IPR017443">
    <property type="entry name" value="RuBisCO_lsu_fd_N"/>
</dbReference>
<dbReference type="InterPro" id="IPR036422">
    <property type="entry name" value="RuBisCO_lsu_N_sf"/>
</dbReference>
<dbReference type="InterPro" id="IPR020888">
    <property type="entry name" value="RuBisCO_lsuI"/>
</dbReference>
<dbReference type="NCBIfam" id="NF003252">
    <property type="entry name" value="PRK04208.1"/>
    <property type="match status" value="1"/>
</dbReference>
<dbReference type="PANTHER" id="PTHR42704">
    <property type="entry name" value="RIBULOSE BISPHOSPHATE CARBOXYLASE"/>
    <property type="match status" value="1"/>
</dbReference>
<dbReference type="PANTHER" id="PTHR42704:SF15">
    <property type="entry name" value="RIBULOSE BISPHOSPHATE CARBOXYLASE LARGE CHAIN"/>
    <property type="match status" value="1"/>
</dbReference>
<dbReference type="Pfam" id="PF00016">
    <property type="entry name" value="RuBisCO_large"/>
    <property type="match status" value="1"/>
</dbReference>
<dbReference type="Pfam" id="PF02788">
    <property type="entry name" value="RuBisCO_large_N"/>
    <property type="match status" value="1"/>
</dbReference>
<dbReference type="SFLD" id="SFLDG01052">
    <property type="entry name" value="RuBisCO"/>
    <property type="match status" value="1"/>
</dbReference>
<dbReference type="SFLD" id="SFLDS00014">
    <property type="entry name" value="RuBisCO"/>
    <property type="match status" value="1"/>
</dbReference>
<dbReference type="SFLD" id="SFLDG00301">
    <property type="entry name" value="RuBisCO-like_proteins"/>
    <property type="match status" value="1"/>
</dbReference>
<dbReference type="SUPFAM" id="SSF51649">
    <property type="entry name" value="RuBisCo, C-terminal domain"/>
    <property type="match status" value="1"/>
</dbReference>
<dbReference type="SUPFAM" id="SSF54966">
    <property type="entry name" value="RuBisCO, large subunit, small (N-terminal) domain"/>
    <property type="match status" value="1"/>
</dbReference>
<dbReference type="PROSITE" id="PS00157">
    <property type="entry name" value="RUBISCO_LARGE"/>
    <property type="match status" value="1"/>
</dbReference>
<comment type="function">
    <text evidence="1">RuBisCO catalyzes two reactions: the carboxylation of D-ribulose 1,5-bisphosphate, the primary event in carbon dioxide fixation, as well as the oxidative fragmentation of the pentose substrate in the photorespiration process. Both reactions occur simultaneously and in competition at the same active site.</text>
</comment>
<comment type="catalytic activity">
    <reaction evidence="1">
        <text>2 (2R)-3-phosphoglycerate + 2 H(+) = D-ribulose 1,5-bisphosphate + CO2 + H2O</text>
        <dbReference type="Rhea" id="RHEA:23124"/>
        <dbReference type="ChEBI" id="CHEBI:15377"/>
        <dbReference type="ChEBI" id="CHEBI:15378"/>
        <dbReference type="ChEBI" id="CHEBI:16526"/>
        <dbReference type="ChEBI" id="CHEBI:57870"/>
        <dbReference type="ChEBI" id="CHEBI:58272"/>
        <dbReference type="EC" id="4.1.1.39"/>
    </reaction>
</comment>
<comment type="catalytic activity">
    <reaction evidence="1">
        <text>D-ribulose 1,5-bisphosphate + O2 = 2-phosphoglycolate + (2R)-3-phosphoglycerate + 2 H(+)</text>
        <dbReference type="Rhea" id="RHEA:36631"/>
        <dbReference type="ChEBI" id="CHEBI:15378"/>
        <dbReference type="ChEBI" id="CHEBI:15379"/>
        <dbReference type="ChEBI" id="CHEBI:57870"/>
        <dbReference type="ChEBI" id="CHEBI:58033"/>
        <dbReference type="ChEBI" id="CHEBI:58272"/>
    </reaction>
</comment>
<comment type="cofactor">
    <cofactor evidence="1">
        <name>Mg(2+)</name>
        <dbReference type="ChEBI" id="CHEBI:18420"/>
    </cofactor>
    <text evidence="1">Binds 1 Mg(2+) ion per subunit.</text>
</comment>
<comment type="subunit">
    <text evidence="1">Heterohexadecamer of 8 large chains and 8 small chains; disulfide-linked. The disulfide link is formed within the large subunit homodimers.</text>
</comment>
<comment type="subcellular location">
    <subcellularLocation>
        <location>Plastid</location>
        <location>Chloroplast</location>
    </subcellularLocation>
</comment>
<comment type="PTM">
    <text evidence="1">The disulfide bond which can form in the large chain dimeric partners within the hexadecamer appears to be associated with oxidative stress and protein turnover.</text>
</comment>
<comment type="miscellaneous">
    <text evidence="1">The basic functional RuBisCO is composed of a large chain homodimer in a 'head-to-tail' conformation. In form I RuBisCO this homodimer is arranged in a barrel-like tetramer with the small subunits forming a tetrameric 'cap' on each end of the 'barrel'.</text>
</comment>
<comment type="similarity">
    <text evidence="1">Belongs to the RuBisCO large chain family. Type I subfamily.</text>
</comment>
<proteinExistence type="inferred from homology"/>
<accession>P25832</accession>
<feature type="propeptide" id="PRO_0000031309" evidence="1">
    <location>
        <begin position="1"/>
        <end position="2"/>
    </location>
</feature>
<feature type="chain" id="PRO_0000031310" description="Ribulose bisphosphate carboxylase large chain">
    <location>
        <begin position="3"/>
        <end position="480"/>
    </location>
</feature>
<feature type="active site" description="Proton acceptor" evidence="1">
    <location>
        <position position="175"/>
    </location>
</feature>
<feature type="active site" description="Proton acceptor" evidence="1">
    <location>
        <position position="294"/>
    </location>
</feature>
<feature type="binding site" description="in homodimeric partner" evidence="1">
    <location>
        <position position="123"/>
    </location>
    <ligand>
        <name>substrate</name>
    </ligand>
</feature>
<feature type="binding site" evidence="1">
    <location>
        <position position="173"/>
    </location>
    <ligand>
        <name>substrate</name>
    </ligand>
</feature>
<feature type="binding site" evidence="1">
    <location>
        <position position="177"/>
    </location>
    <ligand>
        <name>substrate</name>
    </ligand>
</feature>
<feature type="binding site" description="via carbamate group" evidence="1">
    <location>
        <position position="201"/>
    </location>
    <ligand>
        <name>Mg(2+)</name>
        <dbReference type="ChEBI" id="CHEBI:18420"/>
    </ligand>
</feature>
<feature type="binding site" evidence="1">
    <location>
        <position position="203"/>
    </location>
    <ligand>
        <name>Mg(2+)</name>
        <dbReference type="ChEBI" id="CHEBI:18420"/>
    </ligand>
</feature>
<feature type="binding site" evidence="1">
    <location>
        <position position="204"/>
    </location>
    <ligand>
        <name>Mg(2+)</name>
        <dbReference type="ChEBI" id="CHEBI:18420"/>
    </ligand>
</feature>
<feature type="binding site" evidence="1">
    <location>
        <position position="295"/>
    </location>
    <ligand>
        <name>substrate</name>
    </ligand>
</feature>
<feature type="binding site" evidence="1">
    <location>
        <position position="327"/>
    </location>
    <ligand>
        <name>substrate</name>
    </ligand>
</feature>
<feature type="binding site" evidence="1">
    <location>
        <position position="379"/>
    </location>
    <ligand>
        <name>substrate</name>
    </ligand>
</feature>
<feature type="site" description="Transition state stabilizer" evidence="1">
    <location>
        <position position="334"/>
    </location>
</feature>
<feature type="modified residue" description="N-acetylproline" evidence="1">
    <location>
        <position position="3"/>
    </location>
</feature>
<feature type="modified residue" description="N6,N6,N6-trimethyllysine" evidence="1">
    <location>
        <position position="14"/>
    </location>
</feature>
<feature type="modified residue" description="N6-carboxylysine" evidence="1">
    <location>
        <position position="201"/>
    </location>
</feature>
<feature type="disulfide bond" description="Interchain; in linked form" evidence="1">
    <location>
        <position position="247"/>
    </location>
</feature>
<name>RBL_MOLVE</name>
<geneLocation type="chloroplast"/>
<keyword id="KW-0007">Acetylation</keyword>
<keyword id="KW-0113">Calvin cycle</keyword>
<keyword id="KW-0120">Carbon dioxide fixation</keyword>
<keyword id="KW-0150">Chloroplast</keyword>
<keyword id="KW-1015">Disulfide bond</keyword>
<keyword id="KW-0456">Lyase</keyword>
<keyword id="KW-0460">Magnesium</keyword>
<keyword id="KW-0479">Metal-binding</keyword>
<keyword id="KW-0488">Methylation</keyword>
<keyword id="KW-0503">Monooxygenase</keyword>
<keyword id="KW-0560">Oxidoreductase</keyword>
<keyword id="KW-0601">Photorespiration</keyword>
<keyword id="KW-0602">Photosynthesis</keyword>
<keyword id="KW-0934">Plastid</keyword>
<gene>
    <name evidence="1" type="primary">rbcL</name>
</gene>